<accession>Q07DX2</accession>
<evidence type="ECO:0000250" key="1"/>
<evidence type="ECO:0000250" key="2">
    <source>
        <dbReference type="UniProtKB" id="P51636"/>
    </source>
</evidence>
<evidence type="ECO:0000250" key="3">
    <source>
        <dbReference type="UniProtKB" id="Q9WVC3"/>
    </source>
</evidence>
<evidence type="ECO:0000255" key="4"/>
<evidence type="ECO:0000305" key="5"/>
<gene>
    <name type="primary">CAV2</name>
</gene>
<dbReference type="EMBL" id="DP000195">
    <property type="protein sequence ID" value="ABJ08870.1"/>
    <property type="molecule type" value="Genomic_DNA"/>
</dbReference>
<dbReference type="RefSeq" id="XP_065795273.1">
    <property type="nucleotide sequence ID" value="XM_065939201.1"/>
</dbReference>
<dbReference type="SMR" id="Q07DX2"/>
<dbReference type="GeneID" id="136170739"/>
<dbReference type="GO" id="GO:0005901">
    <property type="term" value="C:caveola"/>
    <property type="evidence" value="ECO:0000250"/>
    <property type="project" value="UniProtKB"/>
</dbReference>
<dbReference type="GO" id="GO:0031410">
    <property type="term" value="C:cytoplasmic vesicle"/>
    <property type="evidence" value="ECO:0007669"/>
    <property type="project" value="TreeGrafter"/>
</dbReference>
<dbReference type="GO" id="GO:0005925">
    <property type="term" value="C:focal adhesion"/>
    <property type="evidence" value="ECO:0007669"/>
    <property type="project" value="TreeGrafter"/>
</dbReference>
<dbReference type="GO" id="GO:0000139">
    <property type="term" value="C:Golgi membrane"/>
    <property type="evidence" value="ECO:0007669"/>
    <property type="project" value="UniProtKB-SubCell"/>
</dbReference>
<dbReference type="GO" id="GO:0048471">
    <property type="term" value="C:perinuclear region of cytoplasm"/>
    <property type="evidence" value="ECO:0000250"/>
    <property type="project" value="UniProtKB"/>
</dbReference>
<dbReference type="GO" id="GO:0044853">
    <property type="term" value="C:plasma membrane raft"/>
    <property type="evidence" value="ECO:0000250"/>
    <property type="project" value="UniProtKB"/>
</dbReference>
<dbReference type="GO" id="GO:0042383">
    <property type="term" value="C:sarcolemma"/>
    <property type="evidence" value="ECO:0007669"/>
    <property type="project" value="TreeGrafter"/>
</dbReference>
<dbReference type="GO" id="GO:0031748">
    <property type="term" value="F:D1 dopamine receptor binding"/>
    <property type="evidence" value="ECO:0000250"/>
    <property type="project" value="UniProtKB"/>
</dbReference>
<dbReference type="GO" id="GO:0060090">
    <property type="term" value="F:molecular adaptor activity"/>
    <property type="evidence" value="ECO:0007669"/>
    <property type="project" value="TreeGrafter"/>
</dbReference>
<dbReference type="GO" id="GO:0019901">
    <property type="term" value="F:protein kinase binding"/>
    <property type="evidence" value="ECO:0007669"/>
    <property type="project" value="TreeGrafter"/>
</dbReference>
<dbReference type="GO" id="GO:0070836">
    <property type="term" value="P:caveola assembly"/>
    <property type="evidence" value="ECO:0000250"/>
    <property type="project" value="UniProtKB"/>
</dbReference>
<dbReference type="GO" id="GO:0007029">
    <property type="term" value="P:endoplasmic reticulum organization"/>
    <property type="evidence" value="ECO:0000250"/>
    <property type="project" value="UniProtKB"/>
</dbReference>
<dbReference type="GO" id="GO:0008286">
    <property type="term" value="P:insulin receptor signaling pathway"/>
    <property type="evidence" value="ECO:0007669"/>
    <property type="project" value="TreeGrafter"/>
</dbReference>
<dbReference type="GO" id="GO:0007005">
    <property type="term" value="P:mitochondrion organization"/>
    <property type="evidence" value="ECO:0000250"/>
    <property type="project" value="UniProtKB"/>
</dbReference>
<dbReference type="GO" id="GO:0001937">
    <property type="term" value="P:negative regulation of endothelial cell proliferation"/>
    <property type="evidence" value="ECO:0000250"/>
    <property type="project" value="UniProtKB"/>
</dbReference>
<dbReference type="GO" id="GO:0060161">
    <property type="term" value="P:positive regulation of dopamine receptor signaling pathway"/>
    <property type="evidence" value="ECO:0000250"/>
    <property type="project" value="UniProtKB"/>
</dbReference>
<dbReference type="GO" id="GO:0051480">
    <property type="term" value="P:regulation of cytosolic calcium ion concentration"/>
    <property type="evidence" value="ECO:0007669"/>
    <property type="project" value="TreeGrafter"/>
</dbReference>
<dbReference type="GO" id="GO:0048741">
    <property type="term" value="P:skeletal muscle fiber development"/>
    <property type="evidence" value="ECO:0000250"/>
    <property type="project" value="UniProtKB"/>
</dbReference>
<dbReference type="GO" id="GO:0048278">
    <property type="term" value="P:vesicle docking"/>
    <property type="evidence" value="ECO:0000250"/>
    <property type="project" value="UniProtKB"/>
</dbReference>
<dbReference type="GO" id="GO:0006906">
    <property type="term" value="P:vesicle fusion"/>
    <property type="evidence" value="ECO:0000250"/>
    <property type="project" value="UniProtKB"/>
</dbReference>
<dbReference type="InterPro" id="IPR001612">
    <property type="entry name" value="Caveolin"/>
</dbReference>
<dbReference type="InterPro" id="IPR018361">
    <property type="entry name" value="Caveolin_CS"/>
</dbReference>
<dbReference type="PANTHER" id="PTHR10844">
    <property type="entry name" value="CAVEOLIN"/>
    <property type="match status" value="1"/>
</dbReference>
<dbReference type="PANTHER" id="PTHR10844:SF3">
    <property type="entry name" value="CAVEOLIN-2"/>
    <property type="match status" value="1"/>
</dbReference>
<dbReference type="Pfam" id="PF01146">
    <property type="entry name" value="Caveolin"/>
    <property type="match status" value="1"/>
</dbReference>
<dbReference type="PROSITE" id="PS01210">
    <property type="entry name" value="CAVEOLIN"/>
    <property type="match status" value="1"/>
</dbReference>
<proteinExistence type="inferred from homology"/>
<name>CAV2_MUNRE</name>
<keyword id="KW-1003">Cell membrane</keyword>
<keyword id="KW-0333">Golgi apparatus</keyword>
<keyword id="KW-0472">Membrane</keyword>
<keyword id="KW-0597">Phosphoprotein</keyword>
<reference key="1">
    <citation type="submission" date="2006-09" db="EMBL/GenBank/DDBJ databases">
        <title>NISC comparative sequencing initiative.</title>
        <authorList>
            <person name="Antonellis A."/>
            <person name="Ayele K."/>
            <person name="Benjamin B."/>
            <person name="Blakesley R.W."/>
            <person name="Boakye A."/>
            <person name="Bouffard G.G."/>
            <person name="Brinkley C."/>
            <person name="Brooks S."/>
            <person name="Chu G."/>
            <person name="Coleman H."/>
            <person name="Engle J."/>
            <person name="Gestole M."/>
            <person name="Greene A."/>
            <person name="Guan X."/>
            <person name="Gupta J."/>
            <person name="Haghighi P."/>
            <person name="Han J."/>
            <person name="Hansen N."/>
            <person name="Ho S.-L."/>
            <person name="Hu P."/>
            <person name="Hunter G."/>
            <person name="Hurle B."/>
            <person name="Idol J.R."/>
            <person name="Kwong P."/>
            <person name="Laric P."/>
            <person name="Larson S."/>
            <person name="Lee-Lin S.-Q."/>
            <person name="Legaspi R."/>
            <person name="Madden M."/>
            <person name="Maduro Q.L."/>
            <person name="Maduro V.B."/>
            <person name="Margulies E.H."/>
            <person name="Masiello C."/>
            <person name="Maskeri B."/>
            <person name="McDowell J."/>
            <person name="Mojidi H.A."/>
            <person name="Mullikin J.C."/>
            <person name="Oestreicher J.S."/>
            <person name="Park M."/>
            <person name="Portnoy M.E."/>
            <person name="Prasad A."/>
            <person name="Puri O."/>
            <person name="Reddix-Dugue N."/>
            <person name="Schandler K."/>
            <person name="Schueler M.G."/>
            <person name="Sison C."/>
            <person name="Stantripop S."/>
            <person name="Stephen E."/>
            <person name="Taye A."/>
            <person name="Thomas J.W."/>
            <person name="Thomas P.J."/>
            <person name="Tsipouri V."/>
            <person name="Ung L."/>
            <person name="Vogt J.L."/>
            <person name="Wetherby K.D."/>
            <person name="Young A."/>
            <person name="Green E.D."/>
        </authorList>
    </citation>
    <scope>NUCLEOTIDE SEQUENCE [LARGE SCALE GENOMIC DNA]</scope>
</reference>
<protein>
    <recommendedName>
        <fullName>Caveolin-2</fullName>
    </recommendedName>
</protein>
<sequence length="162" mass="18146">MGLETEKADVQLFMDDDSYSRHSSVDYADPDKFVDPGSDRDPHRLNSHLKVGFEDVIAEPVSTHSFDKVWICSHALFEMSKYVIYKFLTVFLAIPLAFAAGILFATLSCLHIWIIMPFVKTCLMVLPSVQTIWKSVTDVVIAPLCTSVGRSFSSVSLQLSHD</sequence>
<feature type="chain" id="PRO_0000260380" description="Caveolin-2">
    <location>
        <begin position="1"/>
        <end position="162"/>
    </location>
</feature>
<feature type="topological domain" description="Cytoplasmic" evidence="4">
    <location>
        <begin position="1"/>
        <end position="86"/>
    </location>
</feature>
<feature type="intramembrane region" description="Helical" evidence="4">
    <location>
        <begin position="87"/>
        <end position="107"/>
    </location>
</feature>
<feature type="topological domain" description="Cytoplasmic" evidence="4">
    <location>
        <begin position="108"/>
        <end position="162"/>
    </location>
</feature>
<feature type="modified residue" description="Phosphotyrosine" evidence="2">
    <location>
        <position position="19"/>
    </location>
</feature>
<feature type="modified residue" description="Phosphoserine" evidence="3">
    <location>
        <position position="20"/>
    </location>
</feature>
<feature type="modified residue" description="Phosphoserine" evidence="2">
    <location>
        <position position="23"/>
    </location>
</feature>
<feature type="modified residue" description="Phosphotyrosine" evidence="2">
    <location>
        <position position="27"/>
    </location>
</feature>
<comment type="function">
    <text evidence="1">May act as a scaffolding protein within caveolar membranes. Interacts directly with G-protein alpha subunits and can functionally regulate their activity. Caveolin-2 may function as an accessory protein in conjunction with caveolin-1 (By similarity).</text>
</comment>
<comment type="subunit">
    <text evidence="1">Homodimer. Caveolin-1 and -2 colocalize and form a stable hetero-oligomeric complex (By similarity).</text>
</comment>
<comment type="subcellular location">
    <subcellularLocation>
        <location evidence="1">Golgi apparatus membrane</location>
        <topology evidence="1">Peripheral membrane protein</topology>
    </subcellularLocation>
    <subcellularLocation>
        <location evidence="1">Cell membrane</location>
        <topology evidence="1">Peripheral membrane protein</topology>
    </subcellularLocation>
    <subcellularLocation>
        <location evidence="1">Membrane</location>
        <location evidence="1">Caveola</location>
        <topology evidence="1">Peripheral membrane protein</topology>
    </subcellularLocation>
    <text evidence="1">Potential hairpin-like structure in the membrane. Membrane protein of caveolae (By similarity).</text>
</comment>
<comment type="similarity">
    <text evidence="5">Belongs to the caveolin family.</text>
</comment>
<organism>
    <name type="scientific">Muntiacus reevesi</name>
    <name type="common">Reeves' muntjac</name>
    <name type="synonym">Cervus reevesi</name>
    <dbReference type="NCBI Taxonomy" id="9886"/>
    <lineage>
        <taxon>Eukaryota</taxon>
        <taxon>Metazoa</taxon>
        <taxon>Chordata</taxon>
        <taxon>Craniata</taxon>
        <taxon>Vertebrata</taxon>
        <taxon>Euteleostomi</taxon>
        <taxon>Mammalia</taxon>
        <taxon>Eutheria</taxon>
        <taxon>Laurasiatheria</taxon>
        <taxon>Artiodactyla</taxon>
        <taxon>Ruminantia</taxon>
        <taxon>Pecora</taxon>
        <taxon>Cervidae</taxon>
        <taxon>Muntiacinae</taxon>
        <taxon>Muntiacus</taxon>
    </lineage>
</organism>